<reference key="1">
    <citation type="journal article" date="2009" name="PLoS Genet.">
        <title>Organised genome dynamics in the Escherichia coli species results in highly diverse adaptive paths.</title>
        <authorList>
            <person name="Touchon M."/>
            <person name="Hoede C."/>
            <person name="Tenaillon O."/>
            <person name="Barbe V."/>
            <person name="Baeriswyl S."/>
            <person name="Bidet P."/>
            <person name="Bingen E."/>
            <person name="Bonacorsi S."/>
            <person name="Bouchier C."/>
            <person name="Bouvet O."/>
            <person name="Calteau A."/>
            <person name="Chiapello H."/>
            <person name="Clermont O."/>
            <person name="Cruveiller S."/>
            <person name="Danchin A."/>
            <person name="Diard M."/>
            <person name="Dossat C."/>
            <person name="Karoui M.E."/>
            <person name="Frapy E."/>
            <person name="Garry L."/>
            <person name="Ghigo J.M."/>
            <person name="Gilles A.M."/>
            <person name="Johnson J."/>
            <person name="Le Bouguenec C."/>
            <person name="Lescat M."/>
            <person name="Mangenot S."/>
            <person name="Martinez-Jehanne V."/>
            <person name="Matic I."/>
            <person name="Nassif X."/>
            <person name="Oztas S."/>
            <person name="Petit M.A."/>
            <person name="Pichon C."/>
            <person name="Rouy Z."/>
            <person name="Ruf C.S."/>
            <person name="Schneider D."/>
            <person name="Tourret J."/>
            <person name="Vacherie B."/>
            <person name="Vallenet D."/>
            <person name="Medigue C."/>
            <person name="Rocha E.P.C."/>
            <person name="Denamur E."/>
        </authorList>
    </citation>
    <scope>NUCLEOTIDE SEQUENCE [LARGE SCALE GENOMIC DNA]</scope>
    <source>
        <strain>S88 / ExPEC</strain>
    </source>
</reference>
<comment type="function">
    <text evidence="1">Associates with aggregated proteins, together with IbpA, to stabilize and protect them from irreversible denaturation and extensive proteolysis during heat shock and oxidative stress. Aggregated proteins bound to the IbpAB complex are more efficiently refolded and reactivated by the ATP-dependent chaperone systems ClpB and DnaK/DnaJ/GrpE. Its activity is ATP-independent.</text>
</comment>
<comment type="subunit">
    <text evidence="1">Homodimer. Forms homomultimers of about 100-150 subunits at optimal growth temperatures. Conformation changes to oligomers at high temperatures or high ionic concentrations. The decrease in size of the multimers is accompanied by an increase in chaperone activity.</text>
</comment>
<comment type="subcellular location">
    <subcellularLocation>
        <location evidence="1">Cytoplasm</location>
    </subcellularLocation>
</comment>
<comment type="domain">
    <text evidence="1">The N- and C-terminal flexible termini are involved in oligomerization and in the binding of non-native substrate proteins, and are essential for chaperone activity.</text>
</comment>
<comment type="similarity">
    <text evidence="1 2">Belongs to the small heat shock protein (HSP20) family.</text>
</comment>
<protein>
    <recommendedName>
        <fullName evidence="1">Small heat shock protein IbpB</fullName>
    </recommendedName>
    <alternativeName>
        <fullName evidence="1">16 kDa heat shock protein B</fullName>
    </alternativeName>
</protein>
<dbReference type="EMBL" id="CU928161">
    <property type="protein sequence ID" value="CAR05315.1"/>
    <property type="molecule type" value="Genomic_DNA"/>
</dbReference>
<dbReference type="RefSeq" id="WP_001243431.1">
    <property type="nucleotide sequence ID" value="NC_011742.1"/>
</dbReference>
<dbReference type="SMR" id="B7MGA7"/>
<dbReference type="GeneID" id="93778427"/>
<dbReference type="KEGG" id="ecz:ECS88_4109"/>
<dbReference type="HOGENOM" id="CLU_046737_4_2_6"/>
<dbReference type="Proteomes" id="UP000000747">
    <property type="component" value="Chromosome"/>
</dbReference>
<dbReference type="GO" id="GO:0005737">
    <property type="term" value="C:cytoplasm"/>
    <property type="evidence" value="ECO:0007669"/>
    <property type="project" value="UniProtKB-SubCell"/>
</dbReference>
<dbReference type="GO" id="GO:0050821">
    <property type="term" value="P:protein stabilization"/>
    <property type="evidence" value="ECO:0007669"/>
    <property type="project" value="UniProtKB-UniRule"/>
</dbReference>
<dbReference type="CDD" id="cd06470">
    <property type="entry name" value="ACD_IbpA-B_like"/>
    <property type="match status" value="1"/>
</dbReference>
<dbReference type="FunFam" id="2.60.40.790:FF:000005">
    <property type="entry name" value="Small heat shock protein IbpB"/>
    <property type="match status" value="1"/>
</dbReference>
<dbReference type="Gene3D" id="2.60.40.790">
    <property type="match status" value="1"/>
</dbReference>
<dbReference type="HAMAP" id="MF_02001">
    <property type="entry name" value="HSP20_IbpB"/>
    <property type="match status" value="1"/>
</dbReference>
<dbReference type="InterPro" id="IPR002068">
    <property type="entry name" value="A-crystallin/Hsp20_dom"/>
</dbReference>
<dbReference type="InterPro" id="IPR037913">
    <property type="entry name" value="ACD_IbpA/B"/>
</dbReference>
<dbReference type="InterPro" id="IPR008978">
    <property type="entry name" value="HSP20-like_chaperone"/>
</dbReference>
<dbReference type="InterPro" id="IPR022848">
    <property type="entry name" value="HSP20_IbpB"/>
</dbReference>
<dbReference type="NCBIfam" id="NF008618">
    <property type="entry name" value="PRK11597.1"/>
    <property type="match status" value="1"/>
</dbReference>
<dbReference type="PANTHER" id="PTHR47062">
    <property type="match status" value="1"/>
</dbReference>
<dbReference type="PANTHER" id="PTHR47062:SF2">
    <property type="entry name" value="SMALL HEAT SHOCK PROTEIN IBPB"/>
    <property type="match status" value="1"/>
</dbReference>
<dbReference type="Pfam" id="PF00011">
    <property type="entry name" value="HSP20"/>
    <property type="match status" value="1"/>
</dbReference>
<dbReference type="SUPFAM" id="SSF49764">
    <property type="entry name" value="HSP20-like chaperones"/>
    <property type="match status" value="1"/>
</dbReference>
<dbReference type="PROSITE" id="PS01031">
    <property type="entry name" value="SHSP"/>
    <property type="match status" value="1"/>
</dbReference>
<organism>
    <name type="scientific">Escherichia coli O45:K1 (strain S88 / ExPEC)</name>
    <dbReference type="NCBI Taxonomy" id="585035"/>
    <lineage>
        <taxon>Bacteria</taxon>
        <taxon>Pseudomonadati</taxon>
        <taxon>Pseudomonadota</taxon>
        <taxon>Gammaproteobacteria</taxon>
        <taxon>Enterobacterales</taxon>
        <taxon>Enterobacteriaceae</taxon>
        <taxon>Escherichia</taxon>
    </lineage>
</organism>
<name>IBPB_ECO45</name>
<evidence type="ECO:0000255" key="1">
    <source>
        <dbReference type="HAMAP-Rule" id="MF_02001"/>
    </source>
</evidence>
<evidence type="ECO:0000255" key="2">
    <source>
        <dbReference type="PROSITE-ProRule" id="PRU00285"/>
    </source>
</evidence>
<sequence>MRNFDLSPLMRQWIGFDKLANALQNAGESQSFPPYNIEKSDDNHYRITLALAGFRQEDLEIQLEGTRLSVKGTPEQPKEEKKWLHQGLMNQPFSLSFTLAENMEVSGATFVNGLLHIDLIRNEPEPIAAQRIAISERPALNS</sequence>
<keyword id="KW-0143">Chaperone</keyword>
<keyword id="KW-0963">Cytoplasm</keyword>
<keyword id="KW-1185">Reference proteome</keyword>
<keyword id="KW-0346">Stress response</keyword>
<gene>
    <name evidence="1" type="primary">ibpB</name>
    <name type="ordered locus">ECS88_4109</name>
</gene>
<accession>B7MGA7</accession>
<proteinExistence type="inferred from homology"/>
<feature type="chain" id="PRO_1000189096" description="Small heat shock protein IbpB">
    <location>
        <begin position="1"/>
        <end position="142"/>
    </location>
</feature>
<feature type="domain" description="sHSP" evidence="2">
    <location>
        <begin position="26"/>
        <end position="137"/>
    </location>
</feature>